<reference key="1">
    <citation type="journal article" date="2004" name="J. Mol. Microbiol. Biotechnol.">
        <title>The complete genome sequence of Bacillus licheniformis DSM13, an organism with great industrial potential.</title>
        <authorList>
            <person name="Veith B."/>
            <person name="Herzberg C."/>
            <person name="Steckel S."/>
            <person name="Feesche J."/>
            <person name="Maurer K.H."/>
            <person name="Ehrenreich P."/>
            <person name="Baeumer S."/>
            <person name="Henne A."/>
            <person name="Liesegang H."/>
            <person name="Merkl R."/>
            <person name="Ehrenreich A."/>
            <person name="Gottschalk G."/>
        </authorList>
    </citation>
    <scope>NUCLEOTIDE SEQUENCE [LARGE SCALE GENOMIC DNA]</scope>
    <source>
        <strain>ATCC 14580 / DSM 13 / JCM 2505 / CCUG 7422 / NBRC 12200 / NCIMB 9375 / NCTC 10341 / NRRL NRS-1264 / Gibson 46</strain>
    </source>
</reference>
<reference key="2">
    <citation type="journal article" date="2004" name="Genome Biol.">
        <title>Complete genome sequence of the industrial bacterium Bacillus licheniformis and comparisons with closely related Bacillus species.</title>
        <authorList>
            <person name="Rey M.W."/>
            <person name="Ramaiya P."/>
            <person name="Nelson B.A."/>
            <person name="Brody-Karpin S.D."/>
            <person name="Zaretsky E.J."/>
            <person name="Tang M."/>
            <person name="Lopez de Leon A."/>
            <person name="Xiang H."/>
            <person name="Gusti V."/>
            <person name="Clausen I.G."/>
            <person name="Olsen P.B."/>
            <person name="Rasmussen M.D."/>
            <person name="Andersen J.T."/>
            <person name="Joergensen P.L."/>
            <person name="Larsen T.S."/>
            <person name="Sorokin A."/>
            <person name="Bolotin A."/>
            <person name="Lapidus A."/>
            <person name="Galleron N."/>
            <person name="Ehrlich S.D."/>
            <person name="Berka R.M."/>
        </authorList>
    </citation>
    <scope>NUCLEOTIDE SEQUENCE [LARGE SCALE GENOMIC DNA]</scope>
    <source>
        <strain>ATCC 14580 / DSM 13 / JCM 2505 / CCUG 7422 / NBRC 12200 / NCIMB 9375 / NCTC 10341 / NRRL NRS-1264 / Gibson 46</strain>
    </source>
</reference>
<reference key="3">
    <citation type="submission" date="2007-04" db="EMBL/GenBank/DDBJ databases">
        <authorList>
            <person name="Berka R.M."/>
            <person name="Rey M.W."/>
            <person name="Ramaiya P."/>
        </authorList>
    </citation>
    <scope>SEQUENCE REVISION</scope>
</reference>
<protein>
    <recommendedName>
        <fullName evidence="1">Elongation factor 4</fullName>
        <shortName evidence="1">EF-4</shortName>
        <ecNumber evidence="1">3.6.5.n1</ecNumber>
    </recommendedName>
    <alternativeName>
        <fullName evidence="1">Ribosomal back-translocase LepA</fullName>
    </alternativeName>
</protein>
<accession>Q65H50</accession>
<accession>Q62SK6</accession>
<gene>
    <name evidence="1" type="primary">lepA</name>
    <name type="ordered locus">BLi02743</name>
    <name type="ordered locus">BL02092</name>
</gene>
<evidence type="ECO:0000255" key="1">
    <source>
        <dbReference type="HAMAP-Rule" id="MF_00071"/>
    </source>
</evidence>
<dbReference type="EC" id="3.6.5.n1" evidence="1"/>
<dbReference type="EMBL" id="AE017333">
    <property type="protein sequence ID" value="AAU41614.1"/>
    <property type="molecule type" value="Genomic_DNA"/>
</dbReference>
<dbReference type="EMBL" id="CP000002">
    <property type="protein sequence ID" value="AAU24253.2"/>
    <property type="molecule type" value="Genomic_DNA"/>
</dbReference>
<dbReference type="RefSeq" id="WP_003183674.1">
    <property type="nucleotide sequence ID" value="NC_006322.1"/>
</dbReference>
<dbReference type="SMR" id="Q65H50"/>
<dbReference type="STRING" id="279010.BL02092"/>
<dbReference type="GeneID" id="92860666"/>
<dbReference type="KEGG" id="bld:BLi02743"/>
<dbReference type="KEGG" id="bli:BL02092"/>
<dbReference type="eggNOG" id="COG0481">
    <property type="taxonomic scope" value="Bacteria"/>
</dbReference>
<dbReference type="HOGENOM" id="CLU_009995_3_3_9"/>
<dbReference type="Proteomes" id="UP000000606">
    <property type="component" value="Chromosome"/>
</dbReference>
<dbReference type="GO" id="GO:0005886">
    <property type="term" value="C:plasma membrane"/>
    <property type="evidence" value="ECO:0007669"/>
    <property type="project" value="UniProtKB-SubCell"/>
</dbReference>
<dbReference type="GO" id="GO:0005525">
    <property type="term" value="F:GTP binding"/>
    <property type="evidence" value="ECO:0007669"/>
    <property type="project" value="UniProtKB-UniRule"/>
</dbReference>
<dbReference type="GO" id="GO:0003924">
    <property type="term" value="F:GTPase activity"/>
    <property type="evidence" value="ECO:0007669"/>
    <property type="project" value="UniProtKB-UniRule"/>
</dbReference>
<dbReference type="GO" id="GO:0043022">
    <property type="term" value="F:ribosome binding"/>
    <property type="evidence" value="ECO:0007669"/>
    <property type="project" value="UniProtKB-UniRule"/>
</dbReference>
<dbReference type="GO" id="GO:0003746">
    <property type="term" value="F:translation elongation factor activity"/>
    <property type="evidence" value="ECO:0007669"/>
    <property type="project" value="UniProtKB-UniRule"/>
</dbReference>
<dbReference type="GO" id="GO:0045727">
    <property type="term" value="P:positive regulation of translation"/>
    <property type="evidence" value="ECO:0007669"/>
    <property type="project" value="UniProtKB-UniRule"/>
</dbReference>
<dbReference type="CDD" id="cd03699">
    <property type="entry name" value="EF4_II"/>
    <property type="match status" value="1"/>
</dbReference>
<dbReference type="CDD" id="cd16260">
    <property type="entry name" value="EF4_III"/>
    <property type="match status" value="1"/>
</dbReference>
<dbReference type="CDD" id="cd01890">
    <property type="entry name" value="LepA"/>
    <property type="match status" value="1"/>
</dbReference>
<dbReference type="CDD" id="cd03709">
    <property type="entry name" value="lepA_C"/>
    <property type="match status" value="1"/>
</dbReference>
<dbReference type="FunFam" id="3.40.50.300:FF:000078">
    <property type="entry name" value="Elongation factor 4"/>
    <property type="match status" value="1"/>
</dbReference>
<dbReference type="FunFam" id="2.40.30.10:FF:000015">
    <property type="entry name" value="Translation factor GUF1, mitochondrial"/>
    <property type="match status" value="1"/>
</dbReference>
<dbReference type="FunFam" id="3.30.70.240:FF:000007">
    <property type="entry name" value="Translation factor GUF1, mitochondrial"/>
    <property type="match status" value="1"/>
</dbReference>
<dbReference type="FunFam" id="3.30.70.2570:FF:000001">
    <property type="entry name" value="Translation factor GUF1, mitochondrial"/>
    <property type="match status" value="1"/>
</dbReference>
<dbReference type="FunFam" id="3.30.70.870:FF:000004">
    <property type="entry name" value="Translation factor GUF1, mitochondrial"/>
    <property type="match status" value="1"/>
</dbReference>
<dbReference type="Gene3D" id="3.30.70.240">
    <property type="match status" value="1"/>
</dbReference>
<dbReference type="Gene3D" id="3.30.70.2570">
    <property type="entry name" value="Elongation factor 4, C-terminal domain"/>
    <property type="match status" value="1"/>
</dbReference>
<dbReference type="Gene3D" id="3.30.70.870">
    <property type="entry name" value="Elongation Factor G (Translational Gtpase), domain 3"/>
    <property type="match status" value="1"/>
</dbReference>
<dbReference type="Gene3D" id="3.40.50.300">
    <property type="entry name" value="P-loop containing nucleotide triphosphate hydrolases"/>
    <property type="match status" value="1"/>
</dbReference>
<dbReference type="Gene3D" id="2.40.30.10">
    <property type="entry name" value="Translation factors"/>
    <property type="match status" value="1"/>
</dbReference>
<dbReference type="HAMAP" id="MF_00071">
    <property type="entry name" value="LepA"/>
    <property type="match status" value="1"/>
</dbReference>
<dbReference type="InterPro" id="IPR006297">
    <property type="entry name" value="EF-4"/>
</dbReference>
<dbReference type="InterPro" id="IPR035647">
    <property type="entry name" value="EFG_III/V"/>
</dbReference>
<dbReference type="InterPro" id="IPR000640">
    <property type="entry name" value="EFG_V-like"/>
</dbReference>
<dbReference type="InterPro" id="IPR004161">
    <property type="entry name" value="EFTu-like_2"/>
</dbReference>
<dbReference type="InterPro" id="IPR031157">
    <property type="entry name" value="G_TR_CS"/>
</dbReference>
<dbReference type="InterPro" id="IPR038363">
    <property type="entry name" value="LepA_C_sf"/>
</dbReference>
<dbReference type="InterPro" id="IPR013842">
    <property type="entry name" value="LepA_CTD"/>
</dbReference>
<dbReference type="InterPro" id="IPR035654">
    <property type="entry name" value="LepA_IV"/>
</dbReference>
<dbReference type="InterPro" id="IPR027417">
    <property type="entry name" value="P-loop_NTPase"/>
</dbReference>
<dbReference type="InterPro" id="IPR005225">
    <property type="entry name" value="Small_GTP-bd"/>
</dbReference>
<dbReference type="InterPro" id="IPR000795">
    <property type="entry name" value="T_Tr_GTP-bd_dom"/>
</dbReference>
<dbReference type="InterPro" id="IPR009000">
    <property type="entry name" value="Transl_B-barrel_sf"/>
</dbReference>
<dbReference type="NCBIfam" id="TIGR01393">
    <property type="entry name" value="lepA"/>
    <property type="match status" value="1"/>
</dbReference>
<dbReference type="NCBIfam" id="TIGR00231">
    <property type="entry name" value="small_GTP"/>
    <property type="match status" value="1"/>
</dbReference>
<dbReference type="PANTHER" id="PTHR43512:SF4">
    <property type="entry name" value="TRANSLATION FACTOR GUF1 HOMOLOG, CHLOROPLASTIC"/>
    <property type="match status" value="1"/>
</dbReference>
<dbReference type="PANTHER" id="PTHR43512">
    <property type="entry name" value="TRANSLATION FACTOR GUF1-RELATED"/>
    <property type="match status" value="1"/>
</dbReference>
<dbReference type="Pfam" id="PF00679">
    <property type="entry name" value="EFG_C"/>
    <property type="match status" value="1"/>
</dbReference>
<dbReference type="Pfam" id="PF00009">
    <property type="entry name" value="GTP_EFTU"/>
    <property type="match status" value="1"/>
</dbReference>
<dbReference type="Pfam" id="PF03144">
    <property type="entry name" value="GTP_EFTU_D2"/>
    <property type="match status" value="1"/>
</dbReference>
<dbReference type="Pfam" id="PF06421">
    <property type="entry name" value="LepA_C"/>
    <property type="match status" value="1"/>
</dbReference>
<dbReference type="PRINTS" id="PR00315">
    <property type="entry name" value="ELONGATNFCT"/>
</dbReference>
<dbReference type="SMART" id="SM00838">
    <property type="entry name" value="EFG_C"/>
    <property type="match status" value="1"/>
</dbReference>
<dbReference type="SUPFAM" id="SSF54980">
    <property type="entry name" value="EF-G C-terminal domain-like"/>
    <property type="match status" value="2"/>
</dbReference>
<dbReference type="SUPFAM" id="SSF52540">
    <property type="entry name" value="P-loop containing nucleoside triphosphate hydrolases"/>
    <property type="match status" value="1"/>
</dbReference>
<dbReference type="SUPFAM" id="SSF50447">
    <property type="entry name" value="Translation proteins"/>
    <property type="match status" value="1"/>
</dbReference>
<dbReference type="PROSITE" id="PS00301">
    <property type="entry name" value="G_TR_1"/>
    <property type="match status" value="1"/>
</dbReference>
<dbReference type="PROSITE" id="PS51722">
    <property type="entry name" value="G_TR_2"/>
    <property type="match status" value="1"/>
</dbReference>
<organism>
    <name type="scientific">Bacillus licheniformis (strain ATCC 14580 / DSM 13 / JCM 2505 / CCUG 7422 / NBRC 12200 / NCIMB 9375 / NCTC 10341 / NRRL NRS-1264 / Gibson 46)</name>
    <dbReference type="NCBI Taxonomy" id="279010"/>
    <lineage>
        <taxon>Bacteria</taxon>
        <taxon>Bacillati</taxon>
        <taxon>Bacillota</taxon>
        <taxon>Bacilli</taxon>
        <taxon>Bacillales</taxon>
        <taxon>Bacillaceae</taxon>
        <taxon>Bacillus</taxon>
    </lineage>
</organism>
<feature type="chain" id="PRO_0000224743" description="Elongation factor 4">
    <location>
        <begin position="1"/>
        <end position="612"/>
    </location>
</feature>
<feature type="domain" description="tr-type G">
    <location>
        <begin position="12"/>
        <end position="194"/>
    </location>
</feature>
<feature type="binding site" evidence="1">
    <location>
        <begin position="24"/>
        <end position="29"/>
    </location>
    <ligand>
        <name>GTP</name>
        <dbReference type="ChEBI" id="CHEBI:37565"/>
    </ligand>
</feature>
<feature type="binding site" evidence="1">
    <location>
        <begin position="141"/>
        <end position="144"/>
    </location>
    <ligand>
        <name>GTP</name>
        <dbReference type="ChEBI" id="CHEBI:37565"/>
    </ligand>
</feature>
<keyword id="KW-1003">Cell membrane</keyword>
<keyword id="KW-0342">GTP-binding</keyword>
<keyword id="KW-0378">Hydrolase</keyword>
<keyword id="KW-0472">Membrane</keyword>
<keyword id="KW-0547">Nucleotide-binding</keyword>
<keyword id="KW-0648">Protein biosynthesis</keyword>
<keyword id="KW-1185">Reference proteome</keyword>
<proteinExistence type="inferred from homology"/>
<sequence length="612" mass="68344">MTDKEKRLQRQSRIRNFSIIAHIDHGKSTLADRILEKTAAITQREMKEQLLDSMDLERERGITIKLNSVQLKYQAKDGEEYIFHLIDTPGHVDFTYEVSRSLAACEGAILVVDAAQGIEAQTLANVYLALDNDLEILPVINKIDLPSAEPERVRQEVEDVIGLDASEAVLASAKAGIGIEEILEQIVEKVPAPSGDPEAPLQALIFDSLYDAYRGVVAYIRVVQGTVKAGQKIKMMATGKEFEVTEVGVFTPKAVPADELTVGDVGFLTAAIKNVGDTRVGDTITSAENPAPEALPGYRKLNPMVYCGLYPIDTAKYNDLREALEKLELNDSALQYEAETSQALGFGFRCGFLGMLHMEIIQERIEREFNIDLITTAPSVIYDVYMTDGEKIVVDNPSNMPDPQKIDRVEEPFVKATMMVPNDFVGAVMELCQGKRGQFIDMQYLDANRVSIVYEIPLAEIVYEFFDQLKSNTKGYASFDYELIGYKPSKLVKMDIMLNGEKIDALSFIVHRDYAYERGKVIVEKLKELIPRQQFEVPVQAAIGTKIVARSTIKAMRKNVLAKCYGGDISRKRKLLEKQKEGKRRMKQVGSVEVPQEAFMAVLKMDDSGPKS</sequence>
<comment type="function">
    <text evidence="1">Required for accurate and efficient protein synthesis under certain stress conditions. May act as a fidelity factor of the translation reaction, by catalyzing a one-codon backward translocation of tRNAs on improperly translocated ribosomes. Back-translocation proceeds from a post-translocation (POST) complex to a pre-translocation (PRE) complex, thus giving elongation factor G a second chance to translocate the tRNAs correctly. Binds to ribosomes in a GTP-dependent manner.</text>
</comment>
<comment type="catalytic activity">
    <reaction evidence="1">
        <text>GTP + H2O = GDP + phosphate + H(+)</text>
        <dbReference type="Rhea" id="RHEA:19669"/>
        <dbReference type="ChEBI" id="CHEBI:15377"/>
        <dbReference type="ChEBI" id="CHEBI:15378"/>
        <dbReference type="ChEBI" id="CHEBI:37565"/>
        <dbReference type="ChEBI" id="CHEBI:43474"/>
        <dbReference type="ChEBI" id="CHEBI:58189"/>
        <dbReference type="EC" id="3.6.5.n1"/>
    </reaction>
</comment>
<comment type="subcellular location">
    <subcellularLocation>
        <location evidence="1">Cell membrane</location>
        <topology evidence="1">Peripheral membrane protein</topology>
        <orientation evidence="1">Cytoplasmic side</orientation>
    </subcellularLocation>
</comment>
<comment type="similarity">
    <text evidence="1">Belongs to the TRAFAC class translation factor GTPase superfamily. Classic translation factor GTPase family. LepA subfamily.</text>
</comment>
<name>LEPA_BACLD</name>